<sequence>MSSLRLLISDSYDPWFNLAVEECIFRQMSPDQRVLFLWRNADTVVIGRAQNPWKECNTRRMEQDGVKLARRSSGGGAVFHDLGNTCFTFMAGKPGYDKTISTQIILNALASLGIQATASGRNDLVVINGEDERKVSGSAYKETKDRGFHHGTLLLNADLSRLADYLNPDPKKLQAKGITSVRSRVTNLVELLPGIDHEKIRTAIEQAFFAYYDEQVSAEVISPQSLPNLPGFTEQFAKQSSWEWNFGQAPAFSHVVDTRFTWGGIELHFDVLHGAIDRCQIFTDSLNPTPLEALAQRLQGAAYRPDAIDKICQHWIDDFPELQTELQQACHWLVEVLR</sequence>
<keyword id="KW-0067">ATP-binding</keyword>
<keyword id="KW-0963">Cytoplasm</keyword>
<keyword id="KW-0436">Ligase</keyword>
<keyword id="KW-0547">Nucleotide-binding</keyword>
<dbReference type="EC" id="6.3.1.20" evidence="1"/>
<dbReference type="EMBL" id="BX936398">
    <property type="protein sequence ID" value="CAH21560.1"/>
    <property type="molecule type" value="Genomic_DNA"/>
</dbReference>
<dbReference type="RefSeq" id="WP_011192540.1">
    <property type="nucleotide sequence ID" value="NC_006155.1"/>
</dbReference>
<dbReference type="SMR" id="Q66A10"/>
<dbReference type="GeneID" id="49785674"/>
<dbReference type="KEGG" id="ypo:BZ17_132"/>
<dbReference type="KEGG" id="yps:YPTB2322"/>
<dbReference type="PATRIC" id="fig|273123.14.peg.142"/>
<dbReference type="UniPathway" id="UPA00537">
    <property type="reaction ID" value="UER00594"/>
</dbReference>
<dbReference type="UniPathway" id="UPA00537">
    <property type="reaction ID" value="UER00595"/>
</dbReference>
<dbReference type="Proteomes" id="UP000001011">
    <property type="component" value="Chromosome"/>
</dbReference>
<dbReference type="GO" id="GO:0005829">
    <property type="term" value="C:cytosol"/>
    <property type="evidence" value="ECO:0007669"/>
    <property type="project" value="TreeGrafter"/>
</dbReference>
<dbReference type="GO" id="GO:0005524">
    <property type="term" value="F:ATP binding"/>
    <property type="evidence" value="ECO:0007669"/>
    <property type="project" value="UniProtKB-KW"/>
</dbReference>
<dbReference type="GO" id="GO:0016979">
    <property type="term" value="F:lipoate-protein ligase activity"/>
    <property type="evidence" value="ECO:0007669"/>
    <property type="project" value="UniProtKB-UniRule"/>
</dbReference>
<dbReference type="GO" id="GO:0017118">
    <property type="term" value="F:lipoyltransferase activity"/>
    <property type="evidence" value="ECO:0007669"/>
    <property type="project" value="TreeGrafter"/>
</dbReference>
<dbReference type="GO" id="GO:0036211">
    <property type="term" value="P:protein modification process"/>
    <property type="evidence" value="ECO:0007669"/>
    <property type="project" value="InterPro"/>
</dbReference>
<dbReference type="CDD" id="cd16443">
    <property type="entry name" value="LplA"/>
    <property type="match status" value="1"/>
</dbReference>
<dbReference type="FunFam" id="3.30.930.10:FF:000024">
    <property type="entry name" value="Lipoate-protein ligase A"/>
    <property type="match status" value="1"/>
</dbReference>
<dbReference type="Gene3D" id="3.30.930.10">
    <property type="entry name" value="Bira Bifunctional Protein, Domain 2"/>
    <property type="match status" value="1"/>
</dbReference>
<dbReference type="Gene3D" id="3.30.390.50">
    <property type="entry name" value="CO dehydrogenase flavoprotein, C-terminal domain"/>
    <property type="match status" value="1"/>
</dbReference>
<dbReference type="HAMAP" id="MF_01602">
    <property type="entry name" value="LplA"/>
    <property type="match status" value="1"/>
</dbReference>
<dbReference type="InterPro" id="IPR045864">
    <property type="entry name" value="aa-tRNA-synth_II/BPL/LPL"/>
</dbReference>
<dbReference type="InterPro" id="IPR004143">
    <property type="entry name" value="BPL_LPL_catalytic"/>
</dbReference>
<dbReference type="InterPro" id="IPR023741">
    <property type="entry name" value="Lipoate_ligase_A"/>
</dbReference>
<dbReference type="InterPro" id="IPR019491">
    <property type="entry name" value="Lipoate_protein_ligase_C"/>
</dbReference>
<dbReference type="InterPro" id="IPR004562">
    <property type="entry name" value="LipoylTrfase_LipoateP_Ligase"/>
</dbReference>
<dbReference type="NCBIfam" id="TIGR00545">
    <property type="entry name" value="lipoyltrans"/>
    <property type="match status" value="1"/>
</dbReference>
<dbReference type="PANTHER" id="PTHR12561">
    <property type="entry name" value="LIPOATE-PROTEIN LIGASE"/>
    <property type="match status" value="1"/>
</dbReference>
<dbReference type="PANTHER" id="PTHR12561:SF3">
    <property type="entry name" value="LIPOYLTRANSFERASE 1, MITOCHONDRIAL"/>
    <property type="match status" value="1"/>
</dbReference>
<dbReference type="Pfam" id="PF10437">
    <property type="entry name" value="Lip_prot_lig_C"/>
    <property type="match status" value="1"/>
</dbReference>
<dbReference type="Pfam" id="PF21948">
    <property type="entry name" value="LplA-B_cat"/>
    <property type="match status" value="1"/>
</dbReference>
<dbReference type="SUPFAM" id="SSF55681">
    <property type="entry name" value="Class II aaRS and biotin synthetases"/>
    <property type="match status" value="1"/>
</dbReference>
<dbReference type="SUPFAM" id="SSF82649">
    <property type="entry name" value="SufE/NifU"/>
    <property type="match status" value="1"/>
</dbReference>
<dbReference type="PROSITE" id="PS51733">
    <property type="entry name" value="BPL_LPL_CATALYTIC"/>
    <property type="match status" value="1"/>
</dbReference>
<gene>
    <name evidence="1" type="primary">lplA</name>
    <name type="ordered locus">YPTB2322</name>
</gene>
<organism>
    <name type="scientific">Yersinia pseudotuberculosis serotype I (strain IP32953)</name>
    <dbReference type="NCBI Taxonomy" id="273123"/>
    <lineage>
        <taxon>Bacteria</taxon>
        <taxon>Pseudomonadati</taxon>
        <taxon>Pseudomonadota</taxon>
        <taxon>Gammaproteobacteria</taxon>
        <taxon>Enterobacterales</taxon>
        <taxon>Yersiniaceae</taxon>
        <taxon>Yersinia</taxon>
    </lineage>
</organism>
<reference key="1">
    <citation type="journal article" date="2004" name="Proc. Natl. Acad. Sci. U.S.A.">
        <title>Insights into the evolution of Yersinia pestis through whole-genome comparison with Yersinia pseudotuberculosis.</title>
        <authorList>
            <person name="Chain P.S.G."/>
            <person name="Carniel E."/>
            <person name="Larimer F.W."/>
            <person name="Lamerdin J."/>
            <person name="Stoutland P.O."/>
            <person name="Regala W.M."/>
            <person name="Georgescu A.M."/>
            <person name="Vergez L.M."/>
            <person name="Land M.L."/>
            <person name="Motin V.L."/>
            <person name="Brubaker R.R."/>
            <person name="Fowler J."/>
            <person name="Hinnebusch J."/>
            <person name="Marceau M."/>
            <person name="Medigue C."/>
            <person name="Simonet M."/>
            <person name="Chenal-Francisque V."/>
            <person name="Souza B."/>
            <person name="Dacheux D."/>
            <person name="Elliott J.M."/>
            <person name="Derbise A."/>
            <person name="Hauser L.J."/>
            <person name="Garcia E."/>
        </authorList>
    </citation>
    <scope>NUCLEOTIDE SEQUENCE [LARGE SCALE GENOMIC DNA]</scope>
    <source>
        <strain>IP32953</strain>
    </source>
</reference>
<feature type="chain" id="PRO_1000069396" description="Lipoate-protein ligase A">
    <location>
        <begin position="1"/>
        <end position="338"/>
    </location>
</feature>
<feature type="domain" description="BPL/LPL catalytic" evidence="2">
    <location>
        <begin position="29"/>
        <end position="216"/>
    </location>
</feature>
<feature type="binding site" evidence="1">
    <location>
        <position position="71"/>
    </location>
    <ligand>
        <name>ATP</name>
        <dbReference type="ChEBI" id="CHEBI:30616"/>
    </ligand>
</feature>
<feature type="binding site" evidence="1">
    <location>
        <begin position="76"/>
        <end position="79"/>
    </location>
    <ligand>
        <name>ATP</name>
        <dbReference type="ChEBI" id="CHEBI:30616"/>
    </ligand>
</feature>
<feature type="binding site" evidence="1">
    <location>
        <position position="134"/>
    </location>
    <ligand>
        <name>(R)-lipoate</name>
        <dbReference type="ChEBI" id="CHEBI:83088"/>
    </ligand>
</feature>
<feature type="binding site" evidence="1">
    <location>
        <position position="134"/>
    </location>
    <ligand>
        <name>ATP</name>
        <dbReference type="ChEBI" id="CHEBI:30616"/>
    </ligand>
</feature>
<comment type="function">
    <text evidence="1">Catalyzes both the ATP-dependent activation of exogenously supplied lipoate to lipoyl-AMP and the transfer of the activated lipoyl onto the lipoyl domains of lipoate-dependent enzymes.</text>
</comment>
<comment type="catalytic activity">
    <reaction evidence="1">
        <text>L-lysyl-[lipoyl-carrier protein] + (R)-lipoate + ATP = N(6)-[(R)-lipoyl]-L-lysyl-[lipoyl-carrier protein] + AMP + diphosphate + H(+)</text>
        <dbReference type="Rhea" id="RHEA:49288"/>
        <dbReference type="Rhea" id="RHEA-COMP:10500"/>
        <dbReference type="Rhea" id="RHEA-COMP:10502"/>
        <dbReference type="ChEBI" id="CHEBI:15378"/>
        <dbReference type="ChEBI" id="CHEBI:29969"/>
        <dbReference type="ChEBI" id="CHEBI:30616"/>
        <dbReference type="ChEBI" id="CHEBI:33019"/>
        <dbReference type="ChEBI" id="CHEBI:83088"/>
        <dbReference type="ChEBI" id="CHEBI:83099"/>
        <dbReference type="ChEBI" id="CHEBI:456215"/>
        <dbReference type="EC" id="6.3.1.20"/>
    </reaction>
</comment>
<comment type="pathway">
    <text evidence="1">Protein modification; protein lipoylation via exogenous pathway; protein N(6)-(lipoyl)lysine from lipoate: step 1/2.</text>
</comment>
<comment type="pathway">
    <text evidence="1">Protein modification; protein lipoylation via exogenous pathway; protein N(6)-(lipoyl)lysine from lipoate: step 2/2.</text>
</comment>
<comment type="subunit">
    <text evidence="1">Monomer.</text>
</comment>
<comment type="subcellular location">
    <subcellularLocation>
        <location evidence="1">Cytoplasm</location>
    </subcellularLocation>
</comment>
<comment type="miscellaneous">
    <text evidence="1">In the transfer reaction, the free carboxyl group of lipoic acid is attached via an amide linkage to the epsilon-amino group of a specific lysine residue of lipoyl domains of lipoate-dependent enzymes.</text>
</comment>
<comment type="similarity">
    <text evidence="1">Belongs to the LplA family.</text>
</comment>
<accession>Q66A10</accession>
<name>LPLA_YERPS</name>
<protein>
    <recommendedName>
        <fullName evidence="1">Lipoate-protein ligase A</fullName>
        <ecNumber evidence="1">6.3.1.20</ecNumber>
    </recommendedName>
    <alternativeName>
        <fullName evidence="1">Lipoate--protein ligase</fullName>
    </alternativeName>
</protein>
<evidence type="ECO:0000255" key="1">
    <source>
        <dbReference type="HAMAP-Rule" id="MF_01602"/>
    </source>
</evidence>
<evidence type="ECO:0000255" key="2">
    <source>
        <dbReference type="PROSITE-ProRule" id="PRU01067"/>
    </source>
</evidence>
<proteinExistence type="inferred from homology"/>